<name>CSPL3_SORBI</name>
<gene>
    <name type="ordered locus">Sb01g038100</name>
</gene>
<reference key="1">
    <citation type="journal article" date="2009" name="Nature">
        <title>The Sorghum bicolor genome and the diversification of grasses.</title>
        <authorList>
            <person name="Paterson A.H."/>
            <person name="Bowers J.E."/>
            <person name="Bruggmann R."/>
            <person name="Dubchak I."/>
            <person name="Grimwood J."/>
            <person name="Gundlach H."/>
            <person name="Haberer G."/>
            <person name="Hellsten U."/>
            <person name="Mitros T."/>
            <person name="Poliakov A."/>
            <person name="Schmutz J."/>
            <person name="Spannagl M."/>
            <person name="Tang H."/>
            <person name="Wang X."/>
            <person name="Wicker T."/>
            <person name="Bharti A.K."/>
            <person name="Chapman J."/>
            <person name="Feltus F.A."/>
            <person name="Gowik U."/>
            <person name="Grigoriev I.V."/>
            <person name="Lyons E."/>
            <person name="Maher C.A."/>
            <person name="Martis M."/>
            <person name="Narechania A."/>
            <person name="Otillar R.P."/>
            <person name="Penning B.W."/>
            <person name="Salamov A.A."/>
            <person name="Wang Y."/>
            <person name="Zhang L."/>
            <person name="Carpita N.C."/>
            <person name="Freeling M."/>
            <person name="Gingle A.R."/>
            <person name="Hash C.T."/>
            <person name="Keller B."/>
            <person name="Klein P."/>
            <person name="Kresovich S."/>
            <person name="McCann M.C."/>
            <person name="Ming R."/>
            <person name="Peterson D.G."/>
            <person name="Mehboob-ur-Rahman M."/>
            <person name="Ware D."/>
            <person name="Westhoff P."/>
            <person name="Mayer K.F.X."/>
            <person name="Messing J."/>
            <person name="Rokhsar D.S."/>
        </authorList>
    </citation>
    <scope>NUCLEOTIDE SEQUENCE [LARGE SCALE GENOMIC DNA]</scope>
    <source>
        <strain>cv. BTx623</strain>
    </source>
</reference>
<reference key="2">
    <citation type="journal article" date="2018" name="Plant J.">
        <title>The Sorghum bicolor reference genome: improved assembly, gene annotations, a transcriptome atlas, and signatures of genome organization.</title>
        <authorList>
            <person name="McCormick R.F."/>
            <person name="Truong S.K."/>
            <person name="Sreedasyam A."/>
            <person name="Jenkins J."/>
            <person name="Shu S."/>
            <person name="Sims D."/>
            <person name="Kennedy M."/>
            <person name="Amirebrahimi M."/>
            <person name="Weers B.D."/>
            <person name="McKinley B."/>
            <person name="Mattison A."/>
            <person name="Morishige D.T."/>
            <person name="Grimwood J."/>
            <person name="Schmutz J."/>
            <person name="Mullet J.E."/>
        </authorList>
    </citation>
    <scope>GENOME REANNOTATION</scope>
    <source>
        <strain>cv. BTx623</strain>
    </source>
</reference>
<reference key="3">
    <citation type="journal article" date="2014" name="Plant Physiol.">
        <title>Functional and evolutionary analysis of the CASPARIAN STRIP MEMBRANE DOMAIN PROTEIN family.</title>
        <authorList>
            <person name="Roppolo D."/>
            <person name="Boeckmann B."/>
            <person name="Pfister A."/>
            <person name="Boutet E."/>
            <person name="Rubio M.C."/>
            <person name="Denervaud-Tendon V."/>
            <person name="Vermeer J.E."/>
            <person name="Gheyselinck J."/>
            <person name="Xenarios I."/>
            <person name="Geldner N."/>
        </authorList>
    </citation>
    <scope>GENE FAMILY</scope>
    <scope>NOMENCLATURE</scope>
</reference>
<keyword id="KW-1003">Cell membrane</keyword>
<keyword id="KW-0325">Glycoprotein</keyword>
<keyword id="KW-0472">Membrane</keyword>
<keyword id="KW-1185">Reference proteome</keyword>
<keyword id="KW-0812">Transmembrane</keyword>
<keyword id="KW-1133">Transmembrane helix</keyword>
<organism>
    <name type="scientific">Sorghum bicolor</name>
    <name type="common">Sorghum</name>
    <name type="synonym">Sorghum vulgare</name>
    <dbReference type="NCBI Taxonomy" id="4558"/>
    <lineage>
        <taxon>Eukaryota</taxon>
        <taxon>Viridiplantae</taxon>
        <taxon>Streptophyta</taxon>
        <taxon>Embryophyta</taxon>
        <taxon>Tracheophyta</taxon>
        <taxon>Spermatophyta</taxon>
        <taxon>Magnoliopsida</taxon>
        <taxon>Liliopsida</taxon>
        <taxon>Poales</taxon>
        <taxon>Poaceae</taxon>
        <taxon>PACMAD clade</taxon>
        <taxon>Panicoideae</taxon>
        <taxon>Andropogonodae</taxon>
        <taxon>Andropogoneae</taxon>
        <taxon>Sorghinae</taxon>
        <taxon>Sorghum</taxon>
    </lineage>
</organism>
<protein>
    <recommendedName>
        <fullName>CASP-like protein 4B1</fullName>
        <shortName>SbCASPL4B1</shortName>
    </recommendedName>
</protein>
<accession>C5WNF5</accession>
<comment type="subunit">
    <text evidence="1">Homodimer and heterodimers.</text>
</comment>
<comment type="subcellular location">
    <subcellularLocation>
        <location evidence="1">Cell membrane</location>
        <topology evidence="1">Multi-pass membrane protein</topology>
    </subcellularLocation>
</comment>
<comment type="similarity">
    <text evidence="4">Belongs to the Casparian strip membrane proteins (CASP) family.</text>
</comment>
<proteinExistence type="evidence at transcript level"/>
<evidence type="ECO:0000250" key="1"/>
<evidence type="ECO:0000255" key="2"/>
<evidence type="ECO:0000256" key="3">
    <source>
        <dbReference type="SAM" id="MobiDB-lite"/>
    </source>
</evidence>
<evidence type="ECO:0000305" key="4"/>
<dbReference type="EMBL" id="CM000760">
    <property type="protein sequence ID" value="EER95012.1"/>
    <property type="molecule type" value="Genomic_DNA"/>
</dbReference>
<dbReference type="RefSeq" id="XP_002468014.1">
    <property type="nucleotide sequence ID" value="XM_002467969.1"/>
</dbReference>
<dbReference type="SMR" id="C5WNF5"/>
<dbReference type="FunCoup" id="C5WNF5">
    <property type="interactions" value="2"/>
</dbReference>
<dbReference type="STRING" id="4558.C5WNF5"/>
<dbReference type="KEGG" id="sbi:8084021"/>
<dbReference type="eggNOG" id="ENOG502RYC3">
    <property type="taxonomic scope" value="Eukaryota"/>
</dbReference>
<dbReference type="HOGENOM" id="CLU_048961_4_1_1"/>
<dbReference type="InParanoid" id="C5WNF5"/>
<dbReference type="OrthoDB" id="1924823at2759"/>
<dbReference type="Proteomes" id="UP000000768">
    <property type="component" value="Chromosome 1"/>
</dbReference>
<dbReference type="ExpressionAtlas" id="C5WNF5">
    <property type="expression patterns" value="baseline"/>
</dbReference>
<dbReference type="GO" id="GO:0005886">
    <property type="term" value="C:plasma membrane"/>
    <property type="evidence" value="ECO:0007669"/>
    <property type="project" value="UniProtKB-SubCell"/>
</dbReference>
<dbReference type="InterPro" id="IPR006702">
    <property type="entry name" value="CASP_dom"/>
</dbReference>
<dbReference type="PANTHER" id="PTHR33573">
    <property type="entry name" value="CASP-LIKE PROTEIN 4A4"/>
    <property type="match status" value="1"/>
</dbReference>
<dbReference type="PANTHER" id="PTHR33573:SF54">
    <property type="entry name" value="CASP-LIKE PROTEIN 4B2"/>
    <property type="match status" value="1"/>
</dbReference>
<dbReference type="Pfam" id="PF04535">
    <property type="entry name" value="CASP_dom"/>
    <property type="match status" value="1"/>
</dbReference>
<sequence length="220" mass="23203">MAMVTTEAAAAATTAATAAAEKPQDVEKPDYAPYNGASTTADGGTGARARRGDGGGGVVDSVVARWRREDMLDKSPLALHAAAAIFAFVALVLVASNQHGDWMQFDRYQEYRYLLAIASLALLYSLAQAARHAHRMRGGVDPVSSASARLLDFVGDQVVAYLLMSALSAAVPITNRMRSAVVNNFTDATAAAISMAFFSFVALALSAVVSGYKLSKQTYM</sequence>
<feature type="chain" id="PRO_0000412062" description="CASP-like protein 4B1">
    <location>
        <begin position="1"/>
        <end position="220"/>
    </location>
</feature>
<feature type="topological domain" description="Cytoplasmic" evidence="2">
    <location>
        <begin position="1"/>
        <end position="74"/>
    </location>
</feature>
<feature type="transmembrane region" description="Helical" evidence="2">
    <location>
        <begin position="75"/>
        <end position="95"/>
    </location>
</feature>
<feature type="topological domain" description="Extracellular" evidence="2">
    <location>
        <begin position="96"/>
        <end position="109"/>
    </location>
</feature>
<feature type="transmembrane region" description="Helical" evidence="2">
    <location>
        <begin position="110"/>
        <end position="127"/>
    </location>
</feature>
<feature type="topological domain" description="Cytoplasmic" evidence="2">
    <location>
        <begin position="128"/>
        <end position="152"/>
    </location>
</feature>
<feature type="transmembrane region" description="Helical" evidence="2">
    <location>
        <begin position="153"/>
        <end position="173"/>
    </location>
</feature>
<feature type="topological domain" description="Extracellular" evidence="2">
    <location>
        <begin position="174"/>
        <end position="188"/>
    </location>
</feature>
<feature type="transmembrane region" description="Helical" evidence="2">
    <location>
        <begin position="189"/>
        <end position="209"/>
    </location>
</feature>
<feature type="topological domain" description="Cytoplasmic" evidence="2">
    <location>
        <begin position="210"/>
        <end position="220"/>
    </location>
</feature>
<feature type="region of interest" description="Disordered" evidence="3">
    <location>
        <begin position="13"/>
        <end position="56"/>
    </location>
</feature>
<feature type="glycosylation site" description="N-linked (GlcNAc...) asparagine" evidence="2">
    <location>
        <position position="184"/>
    </location>
</feature>